<comment type="function">
    <text evidence="1 2 6">Microtubule-severing enzyme that negatively regulates cell migration and wound healing (By similarity). In migrating cells, targets dynamic microtubules (MTs) at the leading edge and severs them, thereby suppressing motility (By similarity). Microtubule severing releases ARHGEF2 which activates RHOA, which in turn regulates focal ahesion turnover via focal adhesion kinase, as opposed to F-actin polymerization, to suppress cell motility (By similarity). Negative regulator of axon regeneration that suppresses axonal growth by selectively severing dynamic MTs in the distal axon shaft and growth cone (PubMed:33872220). Contributes to proper cell branching during endothelial and neuronal development (By similarity).</text>
</comment>
<comment type="catalytic activity">
    <reaction evidence="3">
        <text>ATP + H2O = ADP + phosphate + H(+)</text>
        <dbReference type="Rhea" id="RHEA:13065"/>
        <dbReference type="ChEBI" id="CHEBI:15377"/>
        <dbReference type="ChEBI" id="CHEBI:15378"/>
        <dbReference type="ChEBI" id="CHEBI:30616"/>
        <dbReference type="ChEBI" id="CHEBI:43474"/>
        <dbReference type="ChEBI" id="CHEBI:456216"/>
    </reaction>
</comment>
<comment type="cofactor">
    <cofactor evidence="3">
        <name>Mg(2+)</name>
        <dbReference type="ChEBI" id="CHEBI:18420"/>
    </cofactor>
</comment>
<comment type="subcellular location">
    <subcellularLocation>
        <location evidence="1">Cytoplasm</location>
        <location evidence="1">Cell cortex</location>
    </subcellularLocation>
    <text evidence="1">Localizes at the leading edge of migrating cells.</text>
</comment>
<comment type="similarity">
    <text evidence="7">Belongs to the AAA ATPase family.</text>
</comment>
<proteinExistence type="inferred from homology"/>
<evidence type="ECO:0000250" key="1">
    <source>
        <dbReference type="UniProtKB" id="A6NMB9"/>
    </source>
</evidence>
<evidence type="ECO:0000250" key="2">
    <source>
        <dbReference type="UniProtKB" id="E9QEA3"/>
    </source>
</evidence>
<evidence type="ECO:0000250" key="3">
    <source>
        <dbReference type="UniProtKB" id="O16299"/>
    </source>
</evidence>
<evidence type="ECO:0000250" key="4">
    <source>
        <dbReference type="UniProtKB" id="Q6PIW4"/>
    </source>
</evidence>
<evidence type="ECO:0000256" key="5">
    <source>
        <dbReference type="SAM" id="MobiDB-lite"/>
    </source>
</evidence>
<evidence type="ECO:0000269" key="6">
    <source>
    </source>
</evidence>
<evidence type="ECO:0000305" key="7"/>
<dbReference type="EC" id="3.6.4.-"/>
<dbReference type="EMBL" id="AABR07058914">
    <property type="status" value="NOT_ANNOTATED_CDS"/>
    <property type="molecule type" value="Genomic_DNA"/>
</dbReference>
<dbReference type="RefSeq" id="NP_001388812.1">
    <property type="nucleotide sequence ID" value="NM_001401883.1"/>
</dbReference>
<dbReference type="RefSeq" id="XP_063118928.1">
    <property type="nucleotide sequence ID" value="XM_063262858.1"/>
</dbReference>
<dbReference type="SMR" id="A0A8I6AGW3"/>
<dbReference type="PhosphoSitePlus" id="A0A8I6AGW3"/>
<dbReference type="Ensembl" id="ENSRNOT00000044982.5">
    <property type="protein sequence ID" value="ENSRNOP00000092082.1"/>
    <property type="gene ID" value="ENSRNOG00000032026.5"/>
</dbReference>
<dbReference type="GeneID" id="102555469"/>
<dbReference type="AGR" id="RGD:1566321"/>
<dbReference type="RGD" id="1566321">
    <property type="gene designation" value="Fignl2"/>
</dbReference>
<dbReference type="GeneTree" id="ENSGT00940000161971"/>
<dbReference type="OMA" id="CPQPNAA"/>
<dbReference type="OrthoDB" id="8803010at2759"/>
<dbReference type="Proteomes" id="UP000002494">
    <property type="component" value="Chromosome 7"/>
</dbReference>
<dbReference type="GO" id="GO:0005938">
    <property type="term" value="C:cell cortex"/>
    <property type="evidence" value="ECO:0007669"/>
    <property type="project" value="UniProtKB-SubCell"/>
</dbReference>
<dbReference type="GO" id="GO:0031252">
    <property type="term" value="C:cell leading edge"/>
    <property type="evidence" value="ECO:0000266"/>
    <property type="project" value="RGD"/>
</dbReference>
<dbReference type="GO" id="GO:0005524">
    <property type="term" value="F:ATP binding"/>
    <property type="evidence" value="ECO:0007669"/>
    <property type="project" value="UniProtKB-KW"/>
</dbReference>
<dbReference type="GO" id="GO:0016887">
    <property type="term" value="F:ATP hydrolysis activity"/>
    <property type="evidence" value="ECO:0000318"/>
    <property type="project" value="GO_Central"/>
</dbReference>
<dbReference type="GO" id="GO:0008568">
    <property type="term" value="F:microtubule severing ATPase activity"/>
    <property type="evidence" value="ECO:0000318"/>
    <property type="project" value="GO_Central"/>
</dbReference>
<dbReference type="GO" id="GO:0051013">
    <property type="term" value="P:microtubule severing"/>
    <property type="evidence" value="ECO:0000250"/>
    <property type="project" value="UniProtKB"/>
</dbReference>
<dbReference type="GO" id="GO:0001763">
    <property type="term" value="P:morphogenesis of a branching structure"/>
    <property type="evidence" value="ECO:0000250"/>
    <property type="project" value="UniProtKB"/>
</dbReference>
<dbReference type="GO" id="GO:0048681">
    <property type="term" value="P:negative regulation of axon regeneration"/>
    <property type="evidence" value="ECO:0000315"/>
    <property type="project" value="UniProtKB"/>
</dbReference>
<dbReference type="GO" id="GO:0030336">
    <property type="term" value="P:negative regulation of cell migration"/>
    <property type="evidence" value="ECO:0000250"/>
    <property type="project" value="UniProtKB"/>
</dbReference>
<dbReference type="GO" id="GO:1903690">
    <property type="term" value="P:negative regulation of wound healing, spreading of epidermal cells"/>
    <property type="evidence" value="ECO:0007669"/>
    <property type="project" value="Ensembl"/>
</dbReference>
<dbReference type="FunFam" id="1.10.8.60:FF:000093">
    <property type="entry name" value="Fidgetin like 2"/>
    <property type="match status" value="1"/>
</dbReference>
<dbReference type="FunFam" id="3.40.50.300:FF:000495">
    <property type="entry name" value="Fidgetin like 2"/>
    <property type="match status" value="1"/>
</dbReference>
<dbReference type="Gene3D" id="1.10.8.60">
    <property type="match status" value="1"/>
</dbReference>
<dbReference type="Gene3D" id="3.40.50.300">
    <property type="entry name" value="P-loop containing nucleotide triphosphate hydrolases"/>
    <property type="match status" value="1"/>
</dbReference>
<dbReference type="InterPro" id="IPR003593">
    <property type="entry name" value="AAA+_ATPase"/>
</dbReference>
<dbReference type="InterPro" id="IPR003959">
    <property type="entry name" value="ATPase_AAA_core"/>
</dbReference>
<dbReference type="InterPro" id="IPR050304">
    <property type="entry name" value="MT-severing_AAA_ATPase"/>
</dbReference>
<dbReference type="InterPro" id="IPR027417">
    <property type="entry name" value="P-loop_NTPase"/>
</dbReference>
<dbReference type="PANTHER" id="PTHR23074">
    <property type="entry name" value="AAA DOMAIN-CONTAINING"/>
    <property type="match status" value="1"/>
</dbReference>
<dbReference type="PANTHER" id="PTHR23074:SF33">
    <property type="entry name" value="FIDGETIN-LIKE PROTEIN 2"/>
    <property type="match status" value="1"/>
</dbReference>
<dbReference type="Pfam" id="PF00004">
    <property type="entry name" value="AAA"/>
    <property type="match status" value="1"/>
</dbReference>
<dbReference type="SMART" id="SM00382">
    <property type="entry name" value="AAA"/>
    <property type="match status" value="1"/>
</dbReference>
<dbReference type="SUPFAM" id="SSF52540">
    <property type="entry name" value="P-loop containing nucleoside triphosphate hydrolases"/>
    <property type="match status" value="1"/>
</dbReference>
<gene>
    <name type="primary">Fignl2</name>
</gene>
<feature type="chain" id="PRO_0000460145" description="Fidgetin-like protein 2">
    <location>
        <begin position="1"/>
        <end position="648"/>
    </location>
</feature>
<feature type="region of interest" description="Disordered" evidence="5">
    <location>
        <begin position="1"/>
        <end position="36"/>
    </location>
</feature>
<feature type="compositionally biased region" description="Polar residues" evidence="5">
    <location>
        <begin position="10"/>
        <end position="27"/>
    </location>
</feature>
<feature type="binding site" evidence="4">
    <location>
        <position position="394"/>
    </location>
    <ligand>
        <name>ATP</name>
        <dbReference type="ChEBI" id="CHEBI:30616"/>
    </ligand>
</feature>
<feature type="binding site" evidence="4">
    <location>
        <begin position="434"/>
        <end position="439"/>
    </location>
    <ligand>
        <name>ATP</name>
        <dbReference type="ChEBI" id="CHEBI:30616"/>
    </ligand>
</feature>
<protein>
    <recommendedName>
        <fullName>Fidgetin-like protein 2</fullName>
        <ecNumber>3.6.4.-</ecNumber>
    </recommendedName>
</protein>
<sequence>MHWTPEHAQPLNQWPEQHLDVSSTTPSPAHKLELPPGGRQRCHYAWAHDDISALTASNLLKRYAEKYSGVLDSPYERPGLGSYGDAAFLNGAKADPEPWPGPEPPYPLASLHEGLPGAKPAGAGGSAGLGGSPVVAGNLTEPLYTGNACGGPSAATEYAAGYGGGYLASGYCAQTSAALAPPPPAALLQPAPPPGYGPSAPLYNYPAAGYAAQPGYGALPPPAAPPAPYLPSGLAAPTPLPAPAPAPPRPAPYGFPGAAEGVSLKRKAVDEGAEARYRKYAYEPAKAPAADGAAYPAADDAECRGNGFRAKPPGTTEDGTGKYGGGGSLKVLGSPAYAPQLEPFDKFAERVPAAHGGFAEPSGEPAKGVDPGTLELVSSKMVDCGPPVQWADVAGQGALKAALEEELLWPLLRPPACPGSARPPRTVLFFGPRGCGKALLGRCLATRLGATLLRLRGAGLATSGAVEGARLLQAAFAAARCRPPAVLLISELDALLPARDDGASLRAPLLTCLDGGCGARADGVLVVGTTSRPAALDEATRRRFALRFYVALPDGAARGQILQRALAQQGCVLSERELAALVQGTQGFSGGELGQLCQQAAAEAGLSGLQRPLSYKEVEAALAKVGPRAPPKELDSLVEWDKMYGSGH</sequence>
<name>FIGL2_RAT</name>
<keyword id="KW-0067">ATP-binding</keyword>
<keyword id="KW-0963">Cytoplasm</keyword>
<keyword id="KW-0378">Hydrolase</keyword>
<keyword id="KW-0547">Nucleotide-binding</keyword>
<keyword id="KW-1185">Reference proteome</keyword>
<reference key="1">
    <citation type="journal article" date="2004" name="Nature">
        <title>Genome sequence of the Brown Norway rat yields insights into mammalian evolution.</title>
        <authorList>
            <person name="Gibbs R.A."/>
            <person name="Weinstock G.M."/>
            <person name="Metzker M.L."/>
            <person name="Muzny D.M."/>
            <person name="Sodergren E.J."/>
            <person name="Scherer S."/>
            <person name="Scott G."/>
            <person name="Steffen D."/>
            <person name="Worley K.C."/>
            <person name="Burch P.E."/>
            <person name="Okwuonu G."/>
            <person name="Hines S."/>
            <person name="Lewis L."/>
            <person name="Deramo C."/>
            <person name="Delgado O."/>
            <person name="Dugan-Rocha S."/>
            <person name="Miner G."/>
            <person name="Morgan M."/>
            <person name="Hawes A."/>
            <person name="Gill R."/>
            <person name="Holt R.A."/>
            <person name="Adams M.D."/>
            <person name="Amanatides P.G."/>
            <person name="Baden-Tillson H."/>
            <person name="Barnstead M."/>
            <person name="Chin S."/>
            <person name="Evans C.A."/>
            <person name="Ferriera S."/>
            <person name="Fosler C."/>
            <person name="Glodek A."/>
            <person name="Gu Z."/>
            <person name="Jennings D."/>
            <person name="Kraft C.L."/>
            <person name="Nguyen T."/>
            <person name="Pfannkoch C.M."/>
            <person name="Sitter C."/>
            <person name="Sutton G.G."/>
            <person name="Venter J.C."/>
            <person name="Woodage T."/>
            <person name="Smith D."/>
            <person name="Lee H.-M."/>
            <person name="Gustafson E."/>
            <person name="Cahill P."/>
            <person name="Kana A."/>
            <person name="Doucette-Stamm L."/>
            <person name="Weinstock K."/>
            <person name="Fechtel K."/>
            <person name="Weiss R.B."/>
            <person name="Dunn D.M."/>
            <person name="Green E.D."/>
            <person name="Blakesley R.W."/>
            <person name="Bouffard G.G."/>
            <person name="De Jong P.J."/>
            <person name="Osoegawa K."/>
            <person name="Zhu B."/>
            <person name="Marra M."/>
            <person name="Schein J."/>
            <person name="Bosdet I."/>
            <person name="Fjell C."/>
            <person name="Jones S."/>
            <person name="Krzywinski M."/>
            <person name="Mathewson C."/>
            <person name="Siddiqui A."/>
            <person name="Wye N."/>
            <person name="McPherson J."/>
            <person name="Zhao S."/>
            <person name="Fraser C.M."/>
            <person name="Shetty J."/>
            <person name="Shatsman S."/>
            <person name="Geer K."/>
            <person name="Chen Y."/>
            <person name="Abramzon S."/>
            <person name="Nierman W.C."/>
            <person name="Havlak P.H."/>
            <person name="Chen R."/>
            <person name="Durbin K.J."/>
            <person name="Egan A."/>
            <person name="Ren Y."/>
            <person name="Song X.-Z."/>
            <person name="Li B."/>
            <person name="Liu Y."/>
            <person name="Qin X."/>
            <person name="Cawley S."/>
            <person name="Cooney A.J."/>
            <person name="D'Souza L.M."/>
            <person name="Martin K."/>
            <person name="Wu J.Q."/>
            <person name="Gonzalez-Garay M.L."/>
            <person name="Jackson A.R."/>
            <person name="Kalafus K.J."/>
            <person name="McLeod M.P."/>
            <person name="Milosavljevic A."/>
            <person name="Virk D."/>
            <person name="Volkov A."/>
            <person name="Wheeler D.A."/>
            <person name="Zhang Z."/>
            <person name="Bailey J.A."/>
            <person name="Eichler E.E."/>
            <person name="Tuzun E."/>
            <person name="Birney E."/>
            <person name="Mongin E."/>
            <person name="Ureta-Vidal A."/>
            <person name="Woodwark C."/>
            <person name="Zdobnov E."/>
            <person name="Bork P."/>
            <person name="Suyama M."/>
            <person name="Torrents D."/>
            <person name="Alexandersson M."/>
            <person name="Trask B.J."/>
            <person name="Young J.M."/>
            <person name="Huang H."/>
            <person name="Wang H."/>
            <person name="Xing H."/>
            <person name="Daniels S."/>
            <person name="Gietzen D."/>
            <person name="Schmidt J."/>
            <person name="Stevens K."/>
            <person name="Vitt U."/>
            <person name="Wingrove J."/>
            <person name="Camara F."/>
            <person name="Mar Alba M."/>
            <person name="Abril J.F."/>
            <person name="Guigo R."/>
            <person name="Smit A."/>
            <person name="Dubchak I."/>
            <person name="Rubin E.M."/>
            <person name="Couronne O."/>
            <person name="Poliakov A."/>
            <person name="Huebner N."/>
            <person name="Ganten D."/>
            <person name="Goesele C."/>
            <person name="Hummel O."/>
            <person name="Kreitler T."/>
            <person name="Lee Y.-A."/>
            <person name="Monti J."/>
            <person name="Schulz H."/>
            <person name="Zimdahl H."/>
            <person name="Himmelbauer H."/>
            <person name="Lehrach H."/>
            <person name="Jacob H.J."/>
            <person name="Bromberg S."/>
            <person name="Gullings-Handley J."/>
            <person name="Jensen-Seaman M.I."/>
            <person name="Kwitek A.E."/>
            <person name="Lazar J."/>
            <person name="Pasko D."/>
            <person name="Tonellato P.J."/>
            <person name="Twigger S."/>
            <person name="Ponting C.P."/>
            <person name="Duarte J.M."/>
            <person name="Rice S."/>
            <person name="Goodstadt L."/>
            <person name="Beatson S.A."/>
            <person name="Emes R.D."/>
            <person name="Winter E.E."/>
            <person name="Webber C."/>
            <person name="Brandt P."/>
            <person name="Nyakatura G."/>
            <person name="Adetobi M."/>
            <person name="Chiaromonte F."/>
            <person name="Elnitski L."/>
            <person name="Eswara P."/>
            <person name="Hardison R.C."/>
            <person name="Hou M."/>
            <person name="Kolbe D."/>
            <person name="Makova K."/>
            <person name="Miller W."/>
            <person name="Nekrutenko A."/>
            <person name="Riemer C."/>
            <person name="Schwartz S."/>
            <person name="Taylor J."/>
            <person name="Yang S."/>
            <person name="Zhang Y."/>
            <person name="Lindpaintner K."/>
            <person name="Andrews T.D."/>
            <person name="Caccamo M."/>
            <person name="Clamp M."/>
            <person name="Clarke L."/>
            <person name="Curwen V."/>
            <person name="Durbin R.M."/>
            <person name="Eyras E."/>
            <person name="Searle S.M."/>
            <person name="Cooper G.M."/>
            <person name="Batzoglou S."/>
            <person name="Brudno M."/>
            <person name="Sidow A."/>
            <person name="Stone E.A."/>
            <person name="Payseur B.A."/>
            <person name="Bourque G."/>
            <person name="Lopez-Otin C."/>
            <person name="Puente X.S."/>
            <person name="Chakrabarti K."/>
            <person name="Chatterji S."/>
            <person name="Dewey C."/>
            <person name="Pachter L."/>
            <person name="Bray N."/>
            <person name="Yap V.B."/>
            <person name="Caspi A."/>
            <person name="Tesler G."/>
            <person name="Pevzner P.A."/>
            <person name="Haussler D."/>
            <person name="Roskin K.M."/>
            <person name="Baertsch R."/>
            <person name="Clawson H."/>
            <person name="Furey T.S."/>
            <person name="Hinrichs A.S."/>
            <person name="Karolchik D."/>
            <person name="Kent W.J."/>
            <person name="Rosenbloom K.R."/>
            <person name="Trumbower H."/>
            <person name="Weirauch M."/>
            <person name="Cooper D.N."/>
            <person name="Stenson P.D."/>
            <person name="Ma B."/>
            <person name="Brent M."/>
            <person name="Arumugam M."/>
            <person name="Shteynberg D."/>
            <person name="Copley R.R."/>
            <person name="Taylor M.S."/>
            <person name="Riethman H."/>
            <person name="Mudunuri U."/>
            <person name="Peterson J."/>
            <person name="Guyer M."/>
            <person name="Felsenfeld A."/>
            <person name="Old S."/>
            <person name="Mockrin S."/>
            <person name="Collins F.S."/>
        </authorList>
    </citation>
    <scope>NUCLEOTIDE SEQUENCE [LARGE SCALE GENOMIC DNA]</scope>
    <source>
        <strain>Brown Norway</strain>
    </source>
</reference>
<reference key="2">
    <citation type="journal article" date="2021" name="JCI Insight">
        <title>Fidgetin-like 2 negatively regulates axonal growth and can be targeted to promote functional nerve regeneration.</title>
        <authorList>
            <person name="Baker L."/>
            <person name="Tar M."/>
            <person name="Kramer A.H."/>
            <person name="Villegas G.A."/>
            <person name="Charafeddine R.A."/>
            <person name="Vafaeva O."/>
            <person name="Nacharaju P."/>
            <person name="Friedman J."/>
            <person name="Davies K.P."/>
            <person name="Sharp D.J."/>
        </authorList>
    </citation>
    <scope>FUNCTION</scope>
</reference>
<organism>
    <name type="scientific">Rattus norvegicus</name>
    <name type="common">Rat</name>
    <dbReference type="NCBI Taxonomy" id="10116"/>
    <lineage>
        <taxon>Eukaryota</taxon>
        <taxon>Metazoa</taxon>
        <taxon>Chordata</taxon>
        <taxon>Craniata</taxon>
        <taxon>Vertebrata</taxon>
        <taxon>Euteleostomi</taxon>
        <taxon>Mammalia</taxon>
        <taxon>Eutheria</taxon>
        <taxon>Euarchontoglires</taxon>
        <taxon>Glires</taxon>
        <taxon>Rodentia</taxon>
        <taxon>Myomorpha</taxon>
        <taxon>Muroidea</taxon>
        <taxon>Muridae</taxon>
        <taxon>Murinae</taxon>
        <taxon>Rattus</taxon>
    </lineage>
</organism>
<accession>A0A8I6AGW3</accession>